<accession>P01248</accession>
<accession>Q28958</accession>
<accession>Q29045</accession>
<gene>
    <name type="primary">GH1</name>
</gene>
<dbReference type="EMBL" id="X53325">
    <property type="protein sequence ID" value="CAA37411.1"/>
    <property type="molecule type" value="mRNA"/>
</dbReference>
<dbReference type="EMBL" id="M17704">
    <property type="protein sequence ID" value="AAA31044.1"/>
    <property type="molecule type" value="Genomic_DNA"/>
</dbReference>
<dbReference type="EMBL" id="U19788">
    <property type="protein sequence ID" value="AAA73478.1"/>
    <property type="status" value="ALT_INIT"/>
    <property type="molecule type" value="mRNA"/>
</dbReference>
<dbReference type="EMBL" id="M27326">
    <property type="protein sequence ID" value="AAA31045.1"/>
    <property type="molecule type" value="mRNA"/>
</dbReference>
<dbReference type="EMBL" id="S72386">
    <property type="protein sequence ID" value="AAB29947.2"/>
    <property type="molecule type" value="Genomic_DNA"/>
</dbReference>
<dbReference type="EMBL" id="U73464">
    <property type="protein sequence ID" value="AAB17619.1"/>
    <property type="molecule type" value="Genomic_DNA"/>
</dbReference>
<dbReference type="PIR" id="JW0015">
    <property type="entry name" value="STPG"/>
</dbReference>
<dbReference type="SMR" id="P01248"/>
<dbReference type="FunCoup" id="P01248">
    <property type="interactions" value="848"/>
</dbReference>
<dbReference type="STRING" id="9823.ENSSSCP00000050738"/>
<dbReference type="PaxDb" id="9823-ENSSSCP00000018314"/>
<dbReference type="Ensembl" id="ENSSSCT00035001704.1">
    <property type="protein sequence ID" value="ENSSSCP00035000543.1"/>
    <property type="gene ID" value="ENSSSCG00035001304.1"/>
</dbReference>
<dbReference type="Ensembl" id="ENSSSCT00055043259.1">
    <property type="protein sequence ID" value="ENSSSCP00055034420.1"/>
    <property type="gene ID" value="ENSSSCG00055021962.1"/>
</dbReference>
<dbReference type="eggNOG" id="ENOG502R5GJ">
    <property type="taxonomic scope" value="Eukaryota"/>
</dbReference>
<dbReference type="InParanoid" id="P01248"/>
<dbReference type="OMA" id="VAYCYSE"/>
<dbReference type="Reactome" id="R-SSC-1170546">
    <property type="pathway name" value="Prolactin receptor signaling"/>
</dbReference>
<dbReference type="Reactome" id="R-SSC-422085">
    <property type="pathway name" value="Synthesis, secretion, and deacylation of Ghrelin"/>
</dbReference>
<dbReference type="Reactome" id="R-SSC-982772">
    <property type="pathway name" value="Growth hormone receptor signaling"/>
</dbReference>
<dbReference type="Proteomes" id="UP000008227">
    <property type="component" value="Unplaced"/>
</dbReference>
<dbReference type="Proteomes" id="UP000314985">
    <property type="component" value="Unplaced"/>
</dbReference>
<dbReference type="Proteomes" id="UP000694570">
    <property type="component" value="Unplaced"/>
</dbReference>
<dbReference type="Proteomes" id="UP000694571">
    <property type="component" value="Unplaced"/>
</dbReference>
<dbReference type="Proteomes" id="UP000694720">
    <property type="component" value="Unplaced"/>
</dbReference>
<dbReference type="Proteomes" id="UP000694722">
    <property type="component" value="Unplaced"/>
</dbReference>
<dbReference type="Proteomes" id="UP000694723">
    <property type="component" value="Unplaced"/>
</dbReference>
<dbReference type="Proteomes" id="UP000694724">
    <property type="component" value="Unplaced"/>
</dbReference>
<dbReference type="Proteomes" id="UP000694725">
    <property type="component" value="Unplaced"/>
</dbReference>
<dbReference type="Proteomes" id="UP000694726">
    <property type="component" value="Unplaced"/>
</dbReference>
<dbReference type="Proteomes" id="UP000694727">
    <property type="component" value="Unplaced"/>
</dbReference>
<dbReference type="Proteomes" id="UP000694728">
    <property type="component" value="Unplaced"/>
</dbReference>
<dbReference type="GO" id="GO:0005615">
    <property type="term" value="C:extracellular space"/>
    <property type="evidence" value="ECO:0000318"/>
    <property type="project" value="GO_Central"/>
</dbReference>
<dbReference type="GO" id="GO:0008083">
    <property type="term" value="F:growth factor activity"/>
    <property type="evidence" value="ECO:0000318"/>
    <property type="project" value="GO_Central"/>
</dbReference>
<dbReference type="GO" id="GO:0005131">
    <property type="term" value="F:growth hormone receptor binding"/>
    <property type="evidence" value="ECO:0000318"/>
    <property type="project" value="GO_Central"/>
</dbReference>
<dbReference type="GO" id="GO:0005179">
    <property type="term" value="F:hormone activity"/>
    <property type="evidence" value="ECO:0000318"/>
    <property type="project" value="GO_Central"/>
</dbReference>
<dbReference type="GO" id="GO:0046872">
    <property type="term" value="F:metal ion binding"/>
    <property type="evidence" value="ECO:0007669"/>
    <property type="project" value="UniProtKB-KW"/>
</dbReference>
<dbReference type="GO" id="GO:0048513">
    <property type="term" value="P:animal organ development"/>
    <property type="evidence" value="ECO:0000318"/>
    <property type="project" value="GO_Central"/>
</dbReference>
<dbReference type="GO" id="GO:0060396">
    <property type="term" value="P:growth hormone receptor signaling pathway"/>
    <property type="evidence" value="ECO:0000318"/>
    <property type="project" value="GO_Central"/>
</dbReference>
<dbReference type="GO" id="GO:0060397">
    <property type="term" value="P:growth hormone receptor signaling pathway via JAK-STAT"/>
    <property type="evidence" value="ECO:0000314"/>
    <property type="project" value="BHF-UCL"/>
</dbReference>
<dbReference type="GO" id="GO:0046427">
    <property type="term" value="P:positive regulation of receptor signaling pathway via JAK-STAT"/>
    <property type="evidence" value="ECO:0000318"/>
    <property type="project" value="GO_Central"/>
</dbReference>
<dbReference type="GO" id="GO:0031667">
    <property type="term" value="P:response to nutrient levels"/>
    <property type="evidence" value="ECO:0000318"/>
    <property type="project" value="GO_Central"/>
</dbReference>
<dbReference type="CDD" id="cd10285">
    <property type="entry name" value="somatotropin_like"/>
    <property type="match status" value="1"/>
</dbReference>
<dbReference type="FunFam" id="1.20.1250.10:FF:000002">
    <property type="entry name" value="Growth hormone"/>
    <property type="match status" value="1"/>
</dbReference>
<dbReference type="Gene3D" id="1.20.1250.10">
    <property type="match status" value="1"/>
</dbReference>
<dbReference type="InterPro" id="IPR009079">
    <property type="entry name" value="4_helix_cytokine-like_core"/>
</dbReference>
<dbReference type="InterPro" id="IPR034975">
    <property type="entry name" value="Somatotropin"/>
</dbReference>
<dbReference type="InterPro" id="IPR001400">
    <property type="entry name" value="Somatotropin/Prolactin"/>
</dbReference>
<dbReference type="InterPro" id="IPR018116">
    <property type="entry name" value="Somatotropin_CS"/>
</dbReference>
<dbReference type="PANTHER" id="PTHR11417:SF2">
    <property type="entry name" value="SOMATOTROPIN"/>
    <property type="match status" value="1"/>
</dbReference>
<dbReference type="PANTHER" id="PTHR11417">
    <property type="entry name" value="SOMATOTROPIN,PROLACTIN"/>
    <property type="match status" value="1"/>
</dbReference>
<dbReference type="Pfam" id="PF00103">
    <property type="entry name" value="Hormone_1"/>
    <property type="match status" value="1"/>
</dbReference>
<dbReference type="PRINTS" id="PR00836">
    <property type="entry name" value="SOMATOTROPIN"/>
</dbReference>
<dbReference type="SUPFAM" id="SSF47266">
    <property type="entry name" value="4-helical cytokines"/>
    <property type="match status" value="1"/>
</dbReference>
<dbReference type="PROSITE" id="PS00266">
    <property type="entry name" value="SOMATOTROPIN_1"/>
    <property type="match status" value="1"/>
</dbReference>
<dbReference type="PROSITE" id="PS00338">
    <property type="entry name" value="SOMATOTROPIN_2"/>
    <property type="match status" value="1"/>
</dbReference>
<keyword id="KW-0903">Direct protein sequencing</keyword>
<keyword id="KW-1015">Disulfide bond</keyword>
<keyword id="KW-0372">Hormone</keyword>
<keyword id="KW-0479">Metal-binding</keyword>
<keyword id="KW-0597">Phosphoprotein</keyword>
<keyword id="KW-1185">Reference proteome</keyword>
<keyword id="KW-0964">Secreted</keyword>
<keyword id="KW-0732">Signal</keyword>
<keyword id="KW-0862">Zinc</keyword>
<evidence type="ECO:0000250" key="1"/>
<evidence type="ECO:0000250" key="2">
    <source>
        <dbReference type="UniProtKB" id="P01241"/>
    </source>
</evidence>
<evidence type="ECO:0000269" key="3">
    <source>
    </source>
</evidence>
<evidence type="ECO:0000305" key="4"/>
<reference key="1">
    <citation type="journal article" date="1987" name="Gene">
        <title>Isolation and characterization of the porcine growth hormone gene.</title>
        <authorList>
            <person name="Vize P.D."/>
            <person name="Wells J.R.E."/>
        </authorList>
    </citation>
    <scope>NUCLEOTIDE SEQUENCE [GENOMIC DNA]</scope>
</reference>
<reference key="2">
    <citation type="journal article" date="1990" name="Biochim. Biophys. Acta">
        <title>Porcine growth hormone: molecular cloning of cDNA and expression in bacterial and mammalian cells.</title>
        <authorList>
            <person name="Kato Y."/>
            <person name="Shimokawa N."/>
            <person name="Kato T."/>
            <person name="Hirai T."/>
            <person name="Yoshihama K."/>
            <person name="Kawai H."/>
            <person name="Hattori M.A."/>
            <person name="Ezashi T."/>
            <person name="Shimogori Y."/>
            <person name="Wakabayashi K."/>
        </authorList>
    </citation>
    <scope>NUCLEOTIDE SEQUENCE</scope>
</reference>
<reference key="3">
    <citation type="journal article" date="1989" name="Chin. J. Biotechnol.">
        <title>Sequencing of porcine growth hormone cDNA.</title>
        <authorList>
            <person name="Qi S.Z."/>
            <person name="Wang X.Z."/>
            <person name="Zhou S.W."/>
            <person name="Jia F."/>
            <person name="Wang H.Y."/>
            <person name="Xia L.I."/>
            <person name="Li J."/>
        </authorList>
    </citation>
    <scope>NUCLEOTIDE SEQUENCE</scope>
    <source>
        <tissue>Pituitary</tissue>
    </source>
</reference>
<reference key="4">
    <citation type="journal article" date="1970" name="J. Biol. Chem.">
        <title>Cyanogen bromide cleavage and partial amino acid sequence of porcine growth hormone.</title>
        <authorList>
            <person name="Mills J.B."/>
            <person name="Howard S.C."/>
            <person name="Scapa S."/>
            <person name="Wilhelmi A.E."/>
        </authorList>
    </citation>
    <scope>PROTEIN SEQUENCE OF 27-30 AND 149-216</scope>
    <scope>DISULFIDE BOND</scope>
</reference>
<reference key="5">
    <citation type="journal article" date="1983" name="DNA">
        <title>Efficient bacterial expression of bovine and porcine growth hormones.</title>
        <authorList>
            <person name="Seeburg P.H."/>
            <person name="Sias S."/>
            <person name="Adelman J."/>
            <person name="de Boer H.A."/>
            <person name="Hayflick J."/>
            <person name="Jhurani P."/>
            <person name="Goeddel D.V."/>
            <person name="Heyneker H.L."/>
        </authorList>
    </citation>
    <scope>NUCLEOTIDE SEQUENCE [MRNA] OF 7-216</scope>
</reference>
<reference key="6">
    <citation type="journal article" date="1992" name="Chin. J. Biotechnol.">
        <title>Cloning and partial sequencing of the porcine growth hormone (pGH) gene from pituitary gland.</title>
        <authorList>
            <person name="Yang Q."/>
            <person name="Zhu B."/>
            <person name="Zhou S."/>
            <person name="Qi S."/>
        </authorList>
    </citation>
    <scope>NUCLEOTIDE SEQUENCE OF 97-158</scope>
</reference>
<reference key="7">
    <citation type="submission" date="1996-11" db="EMBL/GenBank/DDBJ databases">
        <authorList>
            <person name="Jiang Z.H."/>
            <person name="Rottmann O.J."/>
            <person name="Pirchner F."/>
        </authorList>
    </citation>
    <scope>NUCLEOTIDE SEQUENCE OF 5-57</scope>
</reference>
<name>SOMA_PIG</name>
<sequence>MAAGPRTSALLAFALLCLPWTREVGAFPAMPLSSLFANAVLRAQHLHQLAADTYKEFERAYIPEGQRYSIQNAQAAFCFSETIPAPTGKDEAQQRSDVELLRFSLLLIQSWLGPVQFLSRVFTNSLVFGTSDRVYEKLKDLEEGIQALMRELEDGSPRAGQILKQTYDKFDTNLRSDDALLKNYGLLSCFKKDLHKAETYLRVMKCRRFVESSCAF</sequence>
<feature type="signal peptide" evidence="3">
    <location>
        <begin position="1"/>
        <end position="26"/>
    </location>
</feature>
<feature type="chain" id="PRO_0000032995" description="Somatotropin">
    <location>
        <begin position="27"/>
        <end position="216"/>
    </location>
</feature>
<feature type="binding site" evidence="1">
    <location>
        <position position="45"/>
    </location>
    <ligand>
        <name>Zn(2+)</name>
        <dbReference type="ChEBI" id="CHEBI:29105"/>
    </ligand>
</feature>
<feature type="binding site" evidence="1">
    <location>
        <position position="198"/>
    </location>
    <ligand>
        <name>Zn(2+)</name>
        <dbReference type="ChEBI" id="CHEBI:29105"/>
    </ligand>
</feature>
<feature type="modified residue" description="Phosphoserine" evidence="2">
    <location>
        <position position="131"/>
    </location>
</feature>
<feature type="disulfide bond" evidence="1">
    <location>
        <begin position="78"/>
        <end position="189"/>
    </location>
</feature>
<feature type="disulfide bond" evidence="3">
    <location>
        <begin position="206"/>
        <end position="214"/>
    </location>
</feature>
<feature type="sequence conflict" description="In Ref. 5; AAA31045." evidence="4" ref="5">
    <original>A</original>
    <variation>V</variation>
    <location>
        <position position="9"/>
    </location>
</feature>
<feature type="sequence conflict" description="In Ref. 5; AAA31045." evidence="4" ref="5">
    <original>R</original>
    <variation>Q</variation>
    <location>
        <position position="22"/>
    </location>
</feature>
<feature type="sequence conflict" description="In Ref. 3; AAA73478." evidence="4" ref="3">
    <original>C</original>
    <variation>F</variation>
    <location>
        <position position="78"/>
    </location>
</feature>
<feature type="sequence conflict" description="In Ref. 3; AAA73478." evidence="4" ref="3">
    <original>Q</original>
    <variation>T</variation>
    <location>
        <position position="116"/>
    </location>
</feature>
<feature type="sequence conflict" description="In Ref. 4; AA sequence." evidence="4" ref="4">
    <original>H</original>
    <variation>N</variation>
    <location>
        <position position="195"/>
    </location>
</feature>
<feature type="sequence conflict" description="In Ref. 3; AAA73478." evidence="4" ref="3">
    <original>V</original>
    <variation>L</variation>
    <location>
        <position position="203"/>
    </location>
</feature>
<feature type="sequence conflict" description="In Ref. 3; AAA73478." evidence="4" ref="3">
    <original>C</original>
    <variation>S</variation>
    <location>
        <position position="206"/>
    </location>
</feature>
<comment type="function">
    <text>Plays an important role in growth control. Its major role in stimulating body growth is to stimulate the liver and other tissues to secrete IGF1. It stimulates both the differentiation and proliferation of myoblasts. It also stimulates amino acid uptake and protein synthesis in muscle and other tissues.</text>
</comment>
<comment type="subcellular location">
    <subcellularLocation>
        <location>Secreted</location>
    </subcellularLocation>
</comment>
<comment type="similarity">
    <text evidence="4">Belongs to the somatotropin/prolactin family.</text>
</comment>
<comment type="sequence caution" evidence="4">
    <conflict type="erroneous initiation">
        <sequence resource="EMBL-CDS" id="AAA73478"/>
    </conflict>
</comment>
<proteinExistence type="evidence at protein level"/>
<protein>
    <recommendedName>
        <fullName>Somatotropin</fullName>
    </recommendedName>
    <alternativeName>
        <fullName>Growth hormone</fullName>
    </alternativeName>
</protein>
<organism>
    <name type="scientific">Sus scrofa</name>
    <name type="common">Pig</name>
    <dbReference type="NCBI Taxonomy" id="9823"/>
    <lineage>
        <taxon>Eukaryota</taxon>
        <taxon>Metazoa</taxon>
        <taxon>Chordata</taxon>
        <taxon>Craniata</taxon>
        <taxon>Vertebrata</taxon>
        <taxon>Euteleostomi</taxon>
        <taxon>Mammalia</taxon>
        <taxon>Eutheria</taxon>
        <taxon>Laurasiatheria</taxon>
        <taxon>Artiodactyla</taxon>
        <taxon>Suina</taxon>
        <taxon>Suidae</taxon>
        <taxon>Sus</taxon>
    </lineage>
</organism>